<gene>
    <name type="ORF">ORF26</name>
</gene>
<accession>Q6R7J7</accession>
<dbReference type="EMBL" id="AY509253">
    <property type="protein sequence ID" value="AAS00918.1"/>
    <property type="molecule type" value="Genomic_DNA"/>
</dbReference>
<dbReference type="RefSeq" id="YP_024571.1">
    <property type="nucleotide sequence ID" value="NC_005881.2"/>
</dbReference>
<dbReference type="KEGG" id="vg:2948267"/>
<dbReference type="Proteomes" id="UP000007021">
    <property type="component" value="Segment"/>
</dbReference>
<protein>
    <recommendedName>
        <fullName>Uncharacterized protein ORF26</fullName>
    </recommendedName>
</protein>
<organism>
    <name type="scientific">Ostreid herpesvirus 1 (isolate France)</name>
    <name type="common">OsHV-1</name>
    <name type="synonym">Pacific oyster herpesvirus</name>
    <dbReference type="NCBI Taxonomy" id="654903"/>
    <lineage>
        <taxon>Viruses</taxon>
        <taxon>Duplodnaviria</taxon>
        <taxon>Heunggongvirae</taxon>
        <taxon>Peploviricota</taxon>
        <taxon>Herviviricetes</taxon>
        <taxon>Herpesvirales</taxon>
        <taxon>Malacoherpesviridae</taxon>
        <taxon>Ostreavirus</taxon>
        <taxon>Ostreavirus ostreidmalaco1</taxon>
        <taxon>Ostreid herpesvirus 1</taxon>
    </lineage>
</organism>
<reference key="1">
    <citation type="journal article" date="2005" name="J. Gen. Virol.">
        <title>A novel class of herpesvirus with bivalve hosts.</title>
        <authorList>
            <person name="Davison A.J."/>
            <person name="Trus B.L."/>
            <person name="Cheng N."/>
            <person name="Steven A.C."/>
            <person name="Watson M.S."/>
            <person name="Cunningham C."/>
            <person name="Le Deuff R.M."/>
            <person name="Renault T."/>
        </authorList>
    </citation>
    <scope>NUCLEOTIDE SEQUENCE [LARGE SCALE GENOMIC DNA]</scope>
</reference>
<proteinExistence type="predicted"/>
<feature type="chain" id="PRO_0000385057" description="Uncharacterized protein ORF26">
    <location>
        <begin position="1"/>
        <end position="395"/>
    </location>
</feature>
<feature type="coiled-coil region" evidence="1">
    <location>
        <begin position="288"/>
        <end position="318"/>
    </location>
</feature>
<organismHost>
    <name type="scientific">Magallana gigas</name>
    <name type="common">Pacific oyster</name>
    <name type="synonym">Crassostrea gigas</name>
    <dbReference type="NCBI Taxonomy" id="29159"/>
</organismHost>
<organismHost>
    <name type="scientific">Pecten maximus</name>
    <name type="common">King scallop</name>
    <name type="synonym">Pilgrim's clam</name>
    <dbReference type="NCBI Taxonomy" id="6579"/>
</organismHost>
<keyword id="KW-0175">Coiled coil</keyword>
<keyword id="KW-1185">Reference proteome</keyword>
<sequence length="395" mass="45545">MIMNLFKGMPKFTFLNKINPFSMALFNSAKMEKVVSATLKRGLDDEGDELEYDHEMDRLYSFPGEKSGKTNIHKKQKTNDKSTMFWMETLNRISNGEIHTEYEVHNFLIMGNGQTNRYIQQNIMEMINEINDRFTIWDYRLETDQLEKRDVDLMGTHVALIVNPPEKITTDIVVKFIGKMKEQGIRAGLIIVNQDEIVHGSAPMPLGIITHTFGSRILPLLAQNNITALTDKEDNVPPPPKNKYKKRVAIKEEVEYIPQPNADPFLLDTLTEITEEEDLANMVDYESVAKGKEIDNAEIEKTIKEYENIEEGIEDIVKYGYELELEKPTEMDEEEFEVMNQEETVPEEFVITDDLFTDAVYSPVSSDVEAELNKVLFESNEDVNDLDQELMVEFD</sequence>
<name>Y026_OSHVF</name>
<evidence type="ECO:0000255" key="1"/>